<proteinExistence type="evidence at transcript level"/>
<protein>
    <recommendedName>
        <fullName>Cysteine-rich secretory protein LCCL domain-containing 1</fullName>
    </recommendedName>
    <alternativeName>
        <fullName>CocoaCrisp</fullName>
    </alternativeName>
</protein>
<keyword id="KW-1015">Disulfide bond</keyword>
<keyword id="KW-1185">Reference proteome</keyword>
<keyword id="KW-0677">Repeat</keyword>
<keyword id="KW-0964">Secreted</keyword>
<keyword id="KW-0732">Signal</keyword>
<feature type="signal peptide" evidence="1">
    <location>
        <begin position="1"/>
        <end position="23"/>
    </location>
</feature>
<feature type="chain" id="PRO_0000248147" description="Cysteine-rich secretory protein LCCL domain-containing 1">
    <location>
        <begin position="24"/>
        <end position="500"/>
    </location>
</feature>
<feature type="domain" description="SCP">
    <location>
        <begin position="66"/>
        <end position="206"/>
    </location>
</feature>
<feature type="domain" description="LCCL 1" evidence="2">
    <location>
        <begin position="289"/>
        <end position="384"/>
    </location>
</feature>
<feature type="domain" description="LCCL 2" evidence="2">
    <location>
        <begin position="390"/>
        <end position="492"/>
    </location>
</feature>
<feature type="region of interest" description="Disordered" evidence="3">
    <location>
        <begin position="258"/>
        <end position="281"/>
    </location>
</feature>
<feature type="disulfide bond" evidence="2">
    <location>
        <begin position="295"/>
        <end position="313"/>
    </location>
</feature>
<feature type="disulfide bond" evidence="2">
    <location>
        <begin position="317"/>
        <end position="337"/>
    </location>
</feature>
<feature type="disulfide bond" evidence="2">
    <location>
        <begin position="396"/>
        <end position="418"/>
    </location>
</feature>
<feature type="disulfide bond" evidence="2">
    <location>
        <begin position="422"/>
        <end position="445"/>
    </location>
</feature>
<feature type="sequence conflict" description="In Ref. 1; AAK16496." evidence="4" ref="1">
    <original>RV</original>
    <variation>KM</variation>
    <location>
        <begin position="10"/>
        <end position="11"/>
    </location>
</feature>
<feature type="sequence conflict" description="In Ref. 1; AAK16496." evidence="4" ref="1">
    <original>N</original>
    <variation>K</variation>
    <location>
        <position position="28"/>
    </location>
</feature>
<feature type="sequence conflict" description="In Ref. 1; AAK16496." evidence="4" ref="1">
    <original>QRG</original>
    <variation>PRR</variation>
    <location>
        <begin position="51"/>
        <end position="53"/>
    </location>
</feature>
<feature type="sequence conflict" description="In Ref. 1; AAK16496." evidence="4" ref="1">
    <original>Q</original>
    <variation>H</variation>
    <location>
        <position position="63"/>
    </location>
</feature>
<feature type="sequence conflict" description="In Ref. 1; AAK16496." evidence="4" ref="1">
    <original>Y</original>
    <variation>N</variation>
    <location>
        <position position="438"/>
    </location>
</feature>
<feature type="sequence conflict" description="In Ref. 1; AAK16496." evidence="4" ref="1">
    <original>AV</original>
    <variation>LL</variation>
    <location>
        <begin position="448"/>
        <end position="449"/>
    </location>
</feature>
<feature type="sequence conflict" description="In Ref. 1; AAK16496." evidence="4" ref="1">
    <original>N</original>
    <variation>T</variation>
    <location>
        <position position="487"/>
    </location>
</feature>
<gene>
    <name type="primary">Crispld1</name>
</gene>
<accession>Q8CGD2</accession>
<accession>Q8K018</accession>
<accession>Q99MM6</accession>
<comment type="subcellular location">
    <subcellularLocation>
        <location evidence="4">Secreted</location>
    </subcellularLocation>
</comment>
<comment type="similarity">
    <text evidence="4">Belongs to the CRISP family.</text>
</comment>
<comment type="sequence caution" evidence="4">
    <conflict type="frameshift">
        <sequence resource="EMBL-CDS" id="AAK16496"/>
    </conflict>
</comment>
<reference key="1">
    <citation type="submission" date="2000-12" db="EMBL/GenBank/DDBJ databases">
        <title>A novel cysteine-rich secreted protein (CRISP) family member, CocoaCrisp, provides insight into the process of septation in the developing chicken midbrain.</title>
        <authorList>
            <person name="Smith D.M."/>
            <person name="Collins-Racie L.A."/>
            <person name="Lavallie E.R."/>
            <person name="Gamer L."/>
            <person name="Roberts D.J."/>
            <person name="Marigo V.A."/>
            <person name="Copeland N.G."/>
            <person name="Jenkins N.A."/>
            <person name="McCoy J."/>
            <person name="Tabin C.J."/>
        </authorList>
    </citation>
    <scope>NUCLEOTIDE SEQUENCE [MRNA]</scope>
</reference>
<reference key="2">
    <citation type="journal article" date="2005" name="Science">
        <title>The transcriptional landscape of the mammalian genome.</title>
        <authorList>
            <person name="Carninci P."/>
            <person name="Kasukawa T."/>
            <person name="Katayama S."/>
            <person name="Gough J."/>
            <person name="Frith M.C."/>
            <person name="Maeda N."/>
            <person name="Oyama R."/>
            <person name="Ravasi T."/>
            <person name="Lenhard B."/>
            <person name="Wells C."/>
            <person name="Kodzius R."/>
            <person name="Shimokawa K."/>
            <person name="Bajic V.B."/>
            <person name="Brenner S.E."/>
            <person name="Batalov S."/>
            <person name="Forrest A.R."/>
            <person name="Zavolan M."/>
            <person name="Davis M.J."/>
            <person name="Wilming L.G."/>
            <person name="Aidinis V."/>
            <person name="Allen J.E."/>
            <person name="Ambesi-Impiombato A."/>
            <person name="Apweiler R."/>
            <person name="Aturaliya R.N."/>
            <person name="Bailey T.L."/>
            <person name="Bansal M."/>
            <person name="Baxter L."/>
            <person name="Beisel K.W."/>
            <person name="Bersano T."/>
            <person name="Bono H."/>
            <person name="Chalk A.M."/>
            <person name="Chiu K.P."/>
            <person name="Choudhary V."/>
            <person name="Christoffels A."/>
            <person name="Clutterbuck D.R."/>
            <person name="Crowe M.L."/>
            <person name="Dalla E."/>
            <person name="Dalrymple B.P."/>
            <person name="de Bono B."/>
            <person name="Della Gatta G."/>
            <person name="di Bernardo D."/>
            <person name="Down T."/>
            <person name="Engstrom P."/>
            <person name="Fagiolini M."/>
            <person name="Faulkner G."/>
            <person name="Fletcher C.F."/>
            <person name="Fukushima T."/>
            <person name="Furuno M."/>
            <person name="Futaki S."/>
            <person name="Gariboldi M."/>
            <person name="Georgii-Hemming P."/>
            <person name="Gingeras T.R."/>
            <person name="Gojobori T."/>
            <person name="Green R.E."/>
            <person name="Gustincich S."/>
            <person name="Harbers M."/>
            <person name="Hayashi Y."/>
            <person name="Hensch T.K."/>
            <person name="Hirokawa N."/>
            <person name="Hill D."/>
            <person name="Huminiecki L."/>
            <person name="Iacono M."/>
            <person name="Ikeo K."/>
            <person name="Iwama A."/>
            <person name="Ishikawa T."/>
            <person name="Jakt M."/>
            <person name="Kanapin A."/>
            <person name="Katoh M."/>
            <person name="Kawasawa Y."/>
            <person name="Kelso J."/>
            <person name="Kitamura H."/>
            <person name="Kitano H."/>
            <person name="Kollias G."/>
            <person name="Krishnan S.P."/>
            <person name="Kruger A."/>
            <person name="Kummerfeld S.K."/>
            <person name="Kurochkin I.V."/>
            <person name="Lareau L.F."/>
            <person name="Lazarevic D."/>
            <person name="Lipovich L."/>
            <person name="Liu J."/>
            <person name="Liuni S."/>
            <person name="McWilliam S."/>
            <person name="Madan Babu M."/>
            <person name="Madera M."/>
            <person name="Marchionni L."/>
            <person name="Matsuda H."/>
            <person name="Matsuzawa S."/>
            <person name="Miki H."/>
            <person name="Mignone F."/>
            <person name="Miyake S."/>
            <person name="Morris K."/>
            <person name="Mottagui-Tabar S."/>
            <person name="Mulder N."/>
            <person name="Nakano N."/>
            <person name="Nakauchi H."/>
            <person name="Ng P."/>
            <person name="Nilsson R."/>
            <person name="Nishiguchi S."/>
            <person name="Nishikawa S."/>
            <person name="Nori F."/>
            <person name="Ohara O."/>
            <person name="Okazaki Y."/>
            <person name="Orlando V."/>
            <person name="Pang K.C."/>
            <person name="Pavan W.J."/>
            <person name="Pavesi G."/>
            <person name="Pesole G."/>
            <person name="Petrovsky N."/>
            <person name="Piazza S."/>
            <person name="Reed J."/>
            <person name="Reid J.F."/>
            <person name="Ring B.Z."/>
            <person name="Ringwald M."/>
            <person name="Rost B."/>
            <person name="Ruan Y."/>
            <person name="Salzberg S.L."/>
            <person name="Sandelin A."/>
            <person name="Schneider C."/>
            <person name="Schoenbach C."/>
            <person name="Sekiguchi K."/>
            <person name="Semple C.A."/>
            <person name="Seno S."/>
            <person name="Sessa L."/>
            <person name="Sheng Y."/>
            <person name="Shibata Y."/>
            <person name="Shimada H."/>
            <person name="Shimada K."/>
            <person name="Silva D."/>
            <person name="Sinclair B."/>
            <person name="Sperling S."/>
            <person name="Stupka E."/>
            <person name="Sugiura K."/>
            <person name="Sultana R."/>
            <person name="Takenaka Y."/>
            <person name="Taki K."/>
            <person name="Tammoja K."/>
            <person name="Tan S.L."/>
            <person name="Tang S."/>
            <person name="Taylor M.S."/>
            <person name="Tegner J."/>
            <person name="Teichmann S.A."/>
            <person name="Ueda H.R."/>
            <person name="van Nimwegen E."/>
            <person name="Verardo R."/>
            <person name="Wei C.L."/>
            <person name="Yagi K."/>
            <person name="Yamanishi H."/>
            <person name="Zabarovsky E."/>
            <person name="Zhu S."/>
            <person name="Zimmer A."/>
            <person name="Hide W."/>
            <person name="Bult C."/>
            <person name="Grimmond S.M."/>
            <person name="Teasdale R.D."/>
            <person name="Liu E.T."/>
            <person name="Brusic V."/>
            <person name="Quackenbush J."/>
            <person name="Wahlestedt C."/>
            <person name="Mattick J.S."/>
            <person name="Hume D.A."/>
            <person name="Kai C."/>
            <person name="Sasaki D."/>
            <person name="Tomaru Y."/>
            <person name="Fukuda S."/>
            <person name="Kanamori-Katayama M."/>
            <person name="Suzuki M."/>
            <person name="Aoki J."/>
            <person name="Arakawa T."/>
            <person name="Iida J."/>
            <person name="Imamura K."/>
            <person name="Itoh M."/>
            <person name="Kato T."/>
            <person name="Kawaji H."/>
            <person name="Kawagashira N."/>
            <person name="Kawashima T."/>
            <person name="Kojima M."/>
            <person name="Kondo S."/>
            <person name="Konno H."/>
            <person name="Nakano K."/>
            <person name="Ninomiya N."/>
            <person name="Nishio T."/>
            <person name="Okada M."/>
            <person name="Plessy C."/>
            <person name="Shibata K."/>
            <person name="Shiraki T."/>
            <person name="Suzuki S."/>
            <person name="Tagami M."/>
            <person name="Waki K."/>
            <person name="Watahiki A."/>
            <person name="Okamura-Oho Y."/>
            <person name="Suzuki H."/>
            <person name="Kawai J."/>
            <person name="Hayashizaki Y."/>
        </authorList>
    </citation>
    <scope>NUCLEOTIDE SEQUENCE [LARGE SCALE MRNA]</scope>
    <source>
        <strain>C57BL/6J</strain>
        <tissue>Bone</tissue>
        <tissue>Embryo</tissue>
        <tissue>Fetal liver</tissue>
        <tissue>Forelimb</tissue>
    </source>
</reference>
<reference key="3">
    <citation type="journal article" date="2004" name="Genome Res.">
        <title>The status, quality, and expansion of the NIH full-length cDNA project: the Mammalian Gene Collection (MGC).</title>
        <authorList>
            <consortium name="The MGC Project Team"/>
        </authorList>
    </citation>
    <scope>NUCLEOTIDE SEQUENCE [LARGE SCALE MRNA]</scope>
    <source>
        <strain>C57BL/6J</strain>
        <strain>FVB/N</strain>
        <tissue>Mammary tumor</tissue>
    </source>
</reference>
<name>CRLD1_MOUSE</name>
<dbReference type="EMBL" id="AF329198">
    <property type="protein sequence ID" value="AAK16496.1"/>
    <property type="status" value="ALT_FRAME"/>
    <property type="molecule type" value="mRNA"/>
</dbReference>
<dbReference type="EMBL" id="AK132405">
    <property type="protein sequence ID" value="BAE21150.1"/>
    <property type="molecule type" value="mRNA"/>
</dbReference>
<dbReference type="EMBL" id="AK133870">
    <property type="protein sequence ID" value="BAE21900.1"/>
    <property type="molecule type" value="mRNA"/>
</dbReference>
<dbReference type="EMBL" id="AK134273">
    <property type="protein sequence ID" value="BAE22076.1"/>
    <property type="molecule type" value="mRNA"/>
</dbReference>
<dbReference type="EMBL" id="AK137611">
    <property type="protein sequence ID" value="BAE23431.1"/>
    <property type="molecule type" value="mRNA"/>
</dbReference>
<dbReference type="EMBL" id="BC034334">
    <property type="protein sequence ID" value="AAH34334.1"/>
    <property type="molecule type" value="mRNA"/>
</dbReference>
<dbReference type="EMBL" id="BC040768">
    <property type="protein sequence ID" value="AAH40768.1"/>
    <property type="molecule type" value="mRNA"/>
</dbReference>
<dbReference type="CCDS" id="CCDS35519.1"/>
<dbReference type="RefSeq" id="NP_001343480.1">
    <property type="nucleotide sequence ID" value="NM_001356551.2"/>
</dbReference>
<dbReference type="RefSeq" id="NP_001408078.1">
    <property type="nucleotide sequence ID" value="NM_001421149.1"/>
</dbReference>
<dbReference type="RefSeq" id="NP_113579.2">
    <property type="nucleotide sequence ID" value="NM_031402.3"/>
</dbReference>
<dbReference type="RefSeq" id="XP_006495655.1">
    <property type="nucleotide sequence ID" value="XM_006495592.3"/>
</dbReference>
<dbReference type="RefSeq" id="XP_006495656.1">
    <property type="nucleotide sequence ID" value="XM_006495593.3"/>
</dbReference>
<dbReference type="SMR" id="Q8CGD2"/>
<dbReference type="FunCoup" id="Q8CGD2">
    <property type="interactions" value="525"/>
</dbReference>
<dbReference type="STRING" id="10090.ENSMUSP00000092686"/>
<dbReference type="GlyGen" id="Q8CGD2">
    <property type="glycosylation" value="1 site"/>
</dbReference>
<dbReference type="iPTMnet" id="Q8CGD2"/>
<dbReference type="PhosphoSitePlus" id="Q8CGD2"/>
<dbReference type="jPOST" id="Q8CGD2"/>
<dbReference type="PaxDb" id="10090-ENSMUSP00000092686"/>
<dbReference type="ProteomicsDB" id="283957"/>
<dbReference type="Antibodypedia" id="12356">
    <property type="antibodies" value="80 antibodies from 17 providers"/>
</dbReference>
<dbReference type="DNASU" id="83691"/>
<dbReference type="Ensembl" id="ENSMUST00000095075.5">
    <property type="protein sequence ID" value="ENSMUSP00000092686.5"/>
    <property type="gene ID" value="ENSMUSG00000025776.14"/>
</dbReference>
<dbReference type="Ensembl" id="ENSMUST00000159958.8">
    <property type="protein sequence ID" value="ENSMUSP00000124095.2"/>
    <property type="gene ID" value="ENSMUSG00000025776.14"/>
</dbReference>
<dbReference type="GeneID" id="83691"/>
<dbReference type="KEGG" id="mmu:83691"/>
<dbReference type="UCSC" id="uc007akg.1">
    <property type="organism name" value="mouse"/>
</dbReference>
<dbReference type="AGR" id="MGI:1934666"/>
<dbReference type="CTD" id="83690"/>
<dbReference type="MGI" id="MGI:1934666">
    <property type="gene designation" value="Crispld1"/>
</dbReference>
<dbReference type="VEuPathDB" id="HostDB:ENSMUSG00000025776"/>
<dbReference type="eggNOG" id="KOG3017">
    <property type="taxonomic scope" value="Eukaryota"/>
</dbReference>
<dbReference type="GeneTree" id="ENSGT00940000156473"/>
<dbReference type="HOGENOM" id="CLU_042287_0_0_1"/>
<dbReference type="InParanoid" id="Q8CGD2"/>
<dbReference type="OMA" id="MVWDVEL"/>
<dbReference type="OrthoDB" id="414826at2759"/>
<dbReference type="PhylomeDB" id="Q8CGD2"/>
<dbReference type="TreeFam" id="TF316148"/>
<dbReference type="BioGRID-ORCS" id="83691">
    <property type="hits" value="2 hits in 77 CRISPR screens"/>
</dbReference>
<dbReference type="PRO" id="PR:Q8CGD2"/>
<dbReference type="Proteomes" id="UP000000589">
    <property type="component" value="Chromosome 1"/>
</dbReference>
<dbReference type="RNAct" id="Q8CGD2">
    <property type="molecule type" value="protein"/>
</dbReference>
<dbReference type="Bgee" id="ENSMUSG00000025776">
    <property type="expression patterns" value="Expressed in humerus cartilage element and 206 other cell types or tissues"/>
</dbReference>
<dbReference type="ExpressionAtlas" id="Q8CGD2">
    <property type="expression patterns" value="baseline and differential"/>
</dbReference>
<dbReference type="GO" id="GO:0005576">
    <property type="term" value="C:extracellular region"/>
    <property type="evidence" value="ECO:0007669"/>
    <property type="project" value="UniProtKB-SubCell"/>
</dbReference>
<dbReference type="GO" id="GO:0060325">
    <property type="term" value="P:face morphogenesis"/>
    <property type="evidence" value="ECO:0007669"/>
    <property type="project" value="Ensembl"/>
</dbReference>
<dbReference type="GO" id="GO:0061484">
    <property type="term" value="P:hematopoietic stem cell homeostasis"/>
    <property type="evidence" value="ECO:0000315"/>
    <property type="project" value="MGI"/>
</dbReference>
<dbReference type="CDD" id="cd18813">
    <property type="entry name" value="CAP_CRISPLD1"/>
    <property type="match status" value="1"/>
</dbReference>
<dbReference type="FunFam" id="3.40.33.10:FF:000001">
    <property type="entry name" value="Cysteine-rich secretory protein LCCL domain containing 1"/>
    <property type="match status" value="1"/>
</dbReference>
<dbReference type="FunFam" id="2.170.130.20:FF:000001">
    <property type="entry name" value="Cysteine-rich secretory protein LCCL domain-containing 1"/>
    <property type="match status" value="2"/>
</dbReference>
<dbReference type="Gene3D" id="3.40.33.10">
    <property type="entry name" value="CAP"/>
    <property type="match status" value="1"/>
</dbReference>
<dbReference type="Gene3D" id="2.170.130.20">
    <property type="entry name" value="LCCL-like domain"/>
    <property type="match status" value="2"/>
</dbReference>
<dbReference type="InterPro" id="IPR018244">
    <property type="entry name" value="Allrgn_V5/Tpx1_CS"/>
</dbReference>
<dbReference type="InterPro" id="IPR014044">
    <property type="entry name" value="CAP_dom"/>
</dbReference>
<dbReference type="InterPro" id="IPR035940">
    <property type="entry name" value="CAP_sf"/>
</dbReference>
<dbReference type="InterPro" id="IPR051957">
    <property type="entry name" value="CRISP-LCCL_domain"/>
</dbReference>
<dbReference type="InterPro" id="IPR001283">
    <property type="entry name" value="CRISP-related"/>
</dbReference>
<dbReference type="InterPro" id="IPR004043">
    <property type="entry name" value="LCCL"/>
</dbReference>
<dbReference type="InterPro" id="IPR036609">
    <property type="entry name" value="LCCL_sf"/>
</dbReference>
<dbReference type="PANTHER" id="PTHR31331:SF1">
    <property type="entry name" value="CYSTEINE RICH SECRETORY PROTEIN LCCL DOMAIN CONTAINING 2"/>
    <property type="match status" value="1"/>
</dbReference>
<dbReference type="PANTHER" id="PTHR31331">
    <property type="entry name" value="LCCL DOMAIN PROTEIN (AFU_ORTHOLOGUE AFUA_5G08630)"/>
    <property type="match status" value="1"/>
</dbReference>
<dbReference type="Pfam" id="PF00188">
    <property type="entry name" value="CAP"/>
    <property type="match status" value="1"/>
</dbReference>
<dbReference type="Pfam" id="PF03815">
    <property type="entry name" value="LCCL"/>
    <property type="match status" value="2"/>
</dbReference>
<dbReference type="PRINTS" id="PR00837">
    <property type="entry name" value="V5TPXLIKE"/>
</dbReference>
<dbReference type="SMART" id="SM00603">
    <property type="entry name" value="LCCL"/>
    <property type="match status" value="2"/>
</dbReference>
<dbReference type="SMART" id="SM00198">
    <property type="entry name" value="SCP"/>
    <property type="match status" value="1"/>
</dbReference>
<dbReference type="SUPFAM" id="SSF69848">
    <property type="entry name" value="LCCL domain"/>
    <property type="match status" value="2"/>
</dbReference>
<dbReference type="SUPFAM" id="SSF55797">
    <property type="entry name" value="PR-1-like"/>
    <property type="match status" value="1"/>
</dbReference>
<dbReference type="PROSITE" id="PS01010">
    <property type="entry name" value="CRISP_2"/>
    <property type="match status" value="1"/>
</dbReference>
<dbReference type="PROSITE" id="PS50820">
    <property type="entry name" value="LCCL"/>
    <property type="match status" value="2"/>
</dbReference>
<organism>
    <name type="scientific">Mus musculus</name>
    <name type="common">Mouse</name>
    <dbReference type="NCBI Taxonomy" id="10090"/>
    <lineage>
        <taxon>Eukaryota</taxon>
        <taxon>Metazoa</taxon>
        <taxon>Chordata</taxon>
        <taxon>Craniata</taxon>
        <taxon>Vertebrata</taxon>
        <taxon>Euteleostomi</taxon>
        <taxon>Mammalia</taxon>
        <taxon>Eutheria</taxon>
        <taxon>Euarchontoglires</taxon>
        <taxon>Glires</taxon>
        <taxon>Rodentia</taxon>
        <taxon>Myomorpha</taxon>
        <taxon>Muroidea</taxon>
        <taxon>Muridae</taxon>
        <taxon>Murinae</taxon>
        <taxon>Mus</taxon>
        <taxon>Mus</taxon>
    </lineage>
</organism>
<sequence length="500" mass="56918">MMCKAQEWLRVTALLFVARAVPAMVVPNATLLEKLLEKYMDEDGEWWTAKQRGKRAITDNDMQSILDLHNKLRSQVYPTASNMEYMTWDVELERSAESWAEMCLWEHGPASLLPSIGQNLGAHWGRYRPPTFHVQAWYDEVRDFSYPYENECDPYCPFRCSGPVCTHYTQVVWATSSRIGCAVNLCHNMNIWGQIWPKAVYLVCNYSPKGNWWGHAPYKHGRPCSACPPSFGGGCRENLCYKEGSDRYYTPREEETNEIERQQSQVHDTHVRTRSDDSDRNDVISTQQMSQIVSCEVRLRDQCKGTTCNRYECPAGCLDSKAKVIGSVHYEMQSSICRAAIHYGIIDNEGGWVDVTRQGRKHYFIKSNRNGIQTIGKYHSANSFTVSKVTVQAVTCETTVEQLCPFHKPASHCPRVYCPRNCMQSNPHYARVIGTRIYSDLSSICRAAVHAGVVRNHGGYVDVMPVDKRKMYTASFQNGIFSESLQNPTGGKAFRVFAVV</sequence>
<evidence type="ECO:0000255" key="1"/>
<evidence type="ECO:0000255" key="2">
    <source>
        <dbReference type="PROSITE-ProRule" id="PRU00123"/>
    </source>
</evidence>
<evidence type="ECO:0000256" key="3">
    <source>
        <dbReference type="SAM" id="MobiDB-lite"/>
    </source>
</evidence>
<evidence type="ECO:0000305" key="4"/>